<reference key="1">
    <citation type="journal article" date="2008" name="J. Biotechnol.">
        <title>The genome of Xanthomonas campestris pv. campestris B100 and its use for the reconstruction of metabolic pathways involved in xanthan biosynthesis.</title>
        <authorList>
            <person name="Vorhoelter F.-J."/>
            <person name="Schneiker S."/>
            <person name="Goesmann A."/>
            <person name="Krause L."/>
            <person name="Bekel T."/>
            <person name="Kaiser O."/>
            <person name="Linke B."/>
            <person name="Patschkowski T."/>
            <person name="Rueckert C."/>
            <person name="Schmid J."/>
            <person name="Sidhu V.K."/>
            <person name="Sieber V."/>
            <person name="Tauch A."/>
            <person name="Watt S.A."/>
            <person name="Weisshaar B."/>
            <person name="Becker A."/>
            <person name="Niehaus K."/>
            <person name="Puehler A."/>
        </authorList>
    </citation>
    <scope>NUCLEOTIDE SEQUENCE [LARGE SCALE GENOMIC DNA]</scope>
    <source>
        <strain>B100</strain>
    </source>
</reference>
<gene>
    <name evidence="1" type="primary">cheD</name>
    <name type="ordered locus">xcc-b100_2155</name>
</gene>
<dbReference type="EC" id="3.5.1.44" evidence="1"/>
<dbReference type="EMBL" id="AM920689">
    <property type="protein sequence ID" value="CAP51508.1"/>
    <property type="molecule type" value="Genomic_DNA"/>
</dbReference>
<dbReference type="SMR" id="B0RSS2"/>
<dbReference type="KEGG" id="xca:xcc-b100_2155"/>
<dbReference type="HOGENOM" id="CLU_087854_0_0_6"/>
<dbReference type="Proteomes" id="UP000001188">
    <property type="component" value="Chromosome"/>
</dbReference>
<dbReference type="GO" id="GO:0050568">
    <property type="term" value="F:protein-glutamine glutaminase activity"/>
    <property type="evidence" value="ECO:0007669"/>
    <property type="project" value="UniProtKB-UniRule"/>
</dbReference>
<dbReference type="GO" id="GO:0006935">
    <property type="term" value="P:chemotaxis"/>
    <property type="evidence" value="ECO:0007669"/>
    <property type="project" value="UniProtKB-UniRule"/>
</dbReference>
<dbReference type="CDD" id="cd16352">
    <property type="entry name" value="CheD"/>
    <property type="match status" value="1"/>
</dbReference>
<dbReference type="Gene3D" id="3.30.1330.200">
    <property type="match status" value="1"/>
</dbReference>
<dbReference type="HAMAP" id="MF_01440">
    <property type="entry name" value="CheD"/>
    <property type="match status" value="1"/>
</dbReference>
<dbReference type="InterPro" id="IPR038592">
    <property type="entry name" value="CheD-like_sf"/>
</dbReference>
<dbReference type="InterPro" id="IPR005659">
    <property type="entry name" value="Chemorcpt_Glu_NH3ase_CheD"/>
</dbReference>
<dbReference type="InterPro" id="IPR011324">
    <property type="entry name" value="Cytotoxic_necrot_fac-like_cat"/>
</dbReference>
<dbReference type="NCBIfam" id="NF010013">
    <property type="entry name" value="PRK13487.1"/>
    <property type="match status" value="1"/>
</dbReference>
<dbReference type="PANTHER" id="PTHR35147">
    <property type="entry name" value="CHEMORECEPTOR GLUTAMINE DEAMIDASE CHED-RELATED"/>
    <property type="match status" value="1"/>
</dbReference>
<dbReference type="PANTHER" id="PTHR35147:SF2">
    <property type="entry name" value="CHEMORECEPTOR GLUTAMINE DEAMIDASE CHED-RELATED"/>
    <property type="match status" value="1"/>
</dbReference>
<dbReference type="Pfam" id="PF03975">
    <property type="entry name" value="CheD"/>
    <property type="match status" value="1"/>
</dbReference>
<dbReference type="SUPFAM" id="SSF64438">
    <property type="entry name" value="CNF1/YfiH-like putative cysteine hydrolases"/>
    <property type="match status" value="1"/>
</dbReference>
<organism>
    <name type="scientific">Xanthomonas campestris pv. campestris (strain B100)</name>
    <dbReference type="NCBI Taxonomy" id="509169"/>
    <lineage>
        <taxon>Bacteria</taxon>
        <taxon>Pseudomonadati</taxon>
        <taxon>Pseudomonadota</taxon>
        <taxon>Gammaproteobacteria</taxon>
        <taxon>Lysobacterales</taxon>
        <taxon>Lysobacteraceae</taxon>
        <taxon>Xanthomonas</taxon>
    </lineage>
</organism>
<proteinExistence type="inferred from homology"/>
<keyword id="KW-0145">Chemotaxis</keyword>
<keyword id="KW-0378">Hydrolase</keyword>
<comment type="function">
    <text evidence="1">Probably deamidates glutamine residues to glutamate on methyl-accepting chemotaxis receptors (MCPs), playing an important role in chemotaxis.</text>
</comment>
<comment type="catalytic activity">
    <reaction evidence="1">
        <text>L-glutaminyl-[protein] + H2O = L-glutamyl-[protein] + NH4(+)</text>
        <dbReference type="Rhea" id="RHEA:16441"/>
        <dbReference type="Rhea" id="RHEA-COMP:10207"/>
        <dbReference type="Rhea" id="RHEA-COMP:10208"/>
        <dbReference type="ChEBI" id="CHEBI:15377"/>
        <dbReference type="ChEBI" id="CHEBI:28938"/>
        <dbReference type="ChEBI" id="CHEBI:29973"/>
        <dbReference type="ChEBI" id="CHEBI:30011"/>
        <dbReference type="EC" id="3.5.1.44"/>
    </reaction>
</comment>
<comment type="similarity">
    <text evidence="1">Belongs to the CheD family.</text>
</comment>
<protein>
    <recommendedName>
        <fullName evidence="1">Probable chemoreceptor glutamine deamidase CheD</fullName>
        <ecNumber evidence="1">3.5.1.44</ecNumber>
    </recommendedName>
</protein>
<evidence type="ECO:0000255" key="1">
    <source>
        <dbReference type="HAMAP-Rule" id="MF_01440"/>
    </source>
</evidence>
<sequence>MSTAVQVDDVMRYRDSRFQTIAAKLLPTQYLVVDDDTALTTTLGSCVAACLRDPVLKIGGMNHFLLPEGQVGDGAPARYGSYAMELLINDMLKRGAHRKRIEAKVFGGANVLKGFTSNPVGTRNAEFVRQYLQAEHIPIIAEDLCGIHPRKVWFFPTTGRVVVQRLPHAHEAEVAAAESAVRARLSKAPVTGGVELFE</sequence>
<feature type="chain" id="PRO_1000145897" description="Probable chemoreceptor glutamine deamidase CheD">
    <location>
        <begin position="1"/>
        <end position="198"/>
    </location>
</feature>
<accession>B0RSS2</accession>
<name>CHED_XANCB</name>